<organism>
    <name type="scientific">Mycobacterium leprae (strain TN)</name>
    <dbReference type="NCBI Taxonomy" id="272631"/>
    <lineage>
        <taxon>Bacteria</taxon>
        <taxon>Bacillati</taxon>
        <taxon>Actinomycetota</taxon>
        <taxon>Actinomycetes</taxon>
        <taxon>Mycobacteriales</taxon>
        <taxon>Mycobacteriaceae</taxon>
        <taxon>Mycobacterium</taxon>
    </lineage>
</organism>
<evidence type="ECO:0000250" key="1"/>
<evidence type="ECO:0000255" key="2">
    <source>
        <dbReference type="PROSITE-ProRule" id="PRU01008"/>
    </source>
</evidence>
<evidence type="ECO:0000305" key="3"/>
<name>ILVA_MYCLE</name>
<proteinExistence type="inferred from homology"/>
<comment type="function">
    <text evidence="1">Catalyzes the anaerobic formation of alpha-ketobutyrate and ammonia from threonine in a two-step reaction. The first step involved a dehydration of threonine and a production of enamine intermediates (aminocrotonate), which tautomerizes to its imine form (iminobutyrate). Both intermediates are unstable and short-lived. The second step is the nonenzymatic hydrolysis of the enamine/imine intermediates to form 2-ketobutyrate and free ammonia. In the low water environment of the cell, the second step is accelerated by RidA (By similarity).</text>
</comment>
<comment type="catalytic activity">
    <reaction>
        <text>L-threonine = 2-oxobutanoate + NH4(+)</text>
        <dbReference type="Rhea" id="RHEA:22108"/>
        <dbReference type="ChEBI" id="CHEBI:16763"/>
        <dbReference type="ChEBI" id="CHEBI:28938"/>
        <dbReference type="ChEBI" id="CHEBI:57926"/>
        <dbReference type="EC" id="4.3.1.19"/>
    </reaction>
</comment>
<comment type="cofactor">
    <cofactor evidence="1">
        <name>pyridoxal 5'-phosphate</name>
        <dbReference type="ChEBI" id="CHEBI:597326"/>
    </cofactor>
</comment>
<comment type="pathway">
    <text>Amino-acid biosynthesis; L-isoleucine biosynthesis; 2-oxobutanoate from L-threonine: step 1/1.</text>
</comment>
<comment type="subunit">
    <text evidence="1">Homotetramer.</text>
</comment>
<comment type="similarity">
    <text evidence="3">Belongs to the serine/threonine dehydratase family.</text>
</comment>
<sequence>MSAEPSRNPRTPPVSAVDIDGAAKRIAPVVTPTPLQLSDRLSAITGAAVYLKREDLQTVRSYKLRGAYNLLVQLTDEEIAAGVVCSSAGNHAQGVAYACRSLGVHGRVYVPAKTPKQKWDRIRYHGGAFIELIVGRSTYDLAAAAAVDDIERTGATLVPPYDDVRVIAGQGTIAVELLEQLNTEPDLVVVPVGGGGCIAGMTTYLAERTANTAVLGVEPAGAAAMMAALAAGEPVTLDYVDQFVDGAAVNRVGTLPYAALTAAGDMVSITTVDEGAVCTAMLDLYQNEGIIAEPAGALSVAGLLETDIEPGSTVVCLISGGNNDVLRYGEVLERSLIHLGLKHYFLVDFPQKPGALRRFLDEVLGPNDDITLFEYVKRNNRETGEALVGIQLGSAVDLDVLLARMQGTEMHVETLQPGSPAYRYLLL</sequence>
<keyword id="KW-0028">Amino-acid biosynthesis</keyword>
<keyword id="KW-0100">Branched-chain amino acid biosynthesis</keyword>
<keyword id="KW-0412">Isoleucine biosynthesis</keyword>
<keyword id="KW-0456">Lyase</keyword>
<keyword id="KW-0663">Pyridoxal phosphate</keyword>
<keyword id="KW-1185">Reference proteome</keyword>
<feature type="chain" id="PRO_0000185576" description="L-threonine dehydratase biosynthetic IlvA">
    <location>
        <begin position="1"/>
        <end position="427"/>
    </location>
</feature>
<feature type="domain" description="ACT-like" evidence="2">
    <location>
        <begin position="343"/>
        <end position="417"/>
    </location>
</feature>
<feature type="binding site" evidence="1">
    <location>
        <position position="90"/>
    </location>
    <ligand>
        <name>pyridoxal 5'-phosphate</name>
        <dbReference type="ChEBI" id="CHEBI:597326"/>
    </ligand>
</feature>
<feature type="binding site" evidence="1">
    <location>
        <begin position="193"/>
        <end position="197"/>
    </location>
    <ligand>
        <name>pyridoxal 5'-phosphate</name>
        <dbReference type="ChEBI" id="CHEBI:597326"/>
    </ligand>
</feature>
<feature type="binding site" evidence="1">
    <location>
        <position position="319"/>
    </location>
    <ligand>
        <name>pyridoxal 5'-phosphate</name>
        <dbReference type="ChEBI" id="CHEBI:597326"/>
    </ligand>
</feature>
<feature type="modified residue" description="N6-(pyridoxal phosphate)lysine" evidence="1">
    <location>
        <position position="63"/>
    </location>
</feature>
<gene>
    <name type="primary">ilvA</name>
    <name type="ordered locus">ML1209</name>
</gene>
<dbReference type="EC" id="4.3.1.19"/>
<dbReference type="EMBL" id="AL049478">
    <property type="protein sequence ID" value="CAB39589.1"/>
    <property type="molecule type" value="Genomic_DNA"/>
</dbReference>
<dbReference type="EMBL" id="AL583921">
    <property type="protein sequence ID" value="CAC31590.1"/>
    <property type="molecule type" value="Genomic_DNA"/>
</dbReference>
<dbReference type="PIR" id="C87060">
    <property type="entry name" value="C87060"/>
</dbReference>
<dbReference type="RefSeq" id="NP_301876.1">
    <property type="nucleotide sequence ID" value="NC_002677.1"/>
</dbReference>
<dbReference type="RefSeq" id="WP_010908197.1">
    <property type="nucleotide sequence ID" value="NC_002677.1"/>
</dbReference>
<dbReference type="SMR" id="Q9X7F1"/>
<dbReference type="STRING" id="272631.gene:17575040"/>
<dbReference type="KEGG" id="mle:ML1209"/>
<dbReference type="PATRIC" id="fig|272631.5.peg.2219"/>
<dbReference type="Leproma" id="ML1209"/>
<dbReference type="eggNOG" id="COG1171">
    <property type="taxonomic scope" value="Bacteria"/>
</dbReference>
<dbReference type="HOGENOM" id="CLU_021152_4_2_11"/>
<dbReference type="OrthoDB" id="9811476at2"/>
<dbReference type="UniPathway" id="UPA00047">
    <property type="reaction ID" value="UER00054"/>
</dbReference>
<dbReference type="Proteomes" id="UP000000806">
    <property type="component" value="Chromosome"/>
</dbReference>
<dbReference type="GO" id="GO:0003941">
    <property type="term" value="F:L-serine ammonia-lyase activity"/>
    <property type="evidence" value="ECO:0007669"/>
    <property type="project" value="TreeGrafter"/>
</dbReference>
<dbReference type="GO" id="GO:0030170">
    <property type="term" value="F:pyridoxal phosphate binding"/>
    <property type="evidence" value="ECO:0007669"/>
    <property type="project" value="InterPro"/>
</dbReference>
<dbReference type="GO" id="GO:0004794">
    <property type="term" value="F:threonine deaminase activity"/>
    <property type="evidence" value="ECO:0007669"/>
    <property type="project" value="UniProtKB-EC"/>
</dbReference>
<dbReference type="GO" id="GO:0009097">
    <property type="term" value="P:isoleucine biosynthetic process"/>
    <property type="evidence" value="ECO:0007669"/>
    <property type="project" value="UniProtKB-UniPathway"/>
</dbReference>
<dbReference type="GO" id="GO:0006565">
    <property type="term" value="P:L-serine catabolic process"/>
    <property type="evidence" value="ECO:0007669"/>
    <property type="project" value="TreeGrafter"/>
</dbReference>
<dbReference type="GO" id="GO:0006567">
    <property type="term" value="P:threonine catabolic process"/>
    <property type="evidence" value="ECO:0007669"/>
    <property type="project" value="TreeGrafter"/>
</dbReference>
<dbReference type="GO" id="GO:0006566">
    <property type="term" value="P:threonine metabolic process"/>
    <property type="evidence" value="ECO:0000250"/>
    <property type="project" value="UniProtKB"/>
</dbReference>
<dbReference type="CDD" id="cd04907">
    <property type="entry name" value="ACT_ThrD-I_2"/>
    <property type="match status" value="1"/>
</dbReference>
<dbReference type="CDD" id="cd01562">
    <property type="entry name" value="Thr-dehyd"/>
    <property type="match status" value="1"/>
</dbReference>
<dbReference type="FunFam" id="3.40.1020.10:FF:000002">
    <property type="entry name" value="L-threonine dehydratase"/>
    <property type="match status" value="1"/>
</dbReference>
<dbReference type="FunFam" id="3.40.50.1100:FF:000005">
    <property type="entry name" value="Threonine dehydratase catabolic"/>
    <property type="match status" value="1"/>
</dbReference>
<dbReference type="Gene3D" id="3.40.50.1100">
    <property type="match status" value="2"/>
</dbReference>
<dbReference type="Gene3D" id="3.40.1020.10">
    <property type="entry name" value="Biosynthetic Threonine Deaminase, Domain 3"/>
    <property type="match status" value="1"/>
</dbReference>
<dbReference type="InterPro" id="IPR011820">
    <property type="entry name" value="IlvA"/>
</dbReference>
<dbReference type="InterPro" id="IPR050147">
    <property type="entry name" value="Ser/Thr_Dehydratase"/>
</dbReference>
<dbReference type="InterPro" id="IPR000634">
    <property type="entry name" value="Ser/Thr_deHydtase_PyrdxlP-BS"/>
</dbReference>
<dbReference type="InterPro" id="IPR001721">
    <property type="entry name" value="TD_ACT-like"/>
</dbReference>
<dbReference type="InterPro" id="IPR038110">
    <property type="entry name" value="TD_ACT-like_sf"/>
</dbReference>
<dbReference type="InterPro" id="IPR001926">
    <property type="entry name" value="TrpB-like_PALP"/>
</dbReference>
<dbReference type="InterPro" id="IPR036052">
    <property type="entry name" value="TrpB-like_PALP_sf"/>
</dbReference>
<dbReference type="NCBIfam" id="NF006390">
    <property type="entry name" value="PRK08639.1"/>
    <property type="match status" value="1"/>
</dbReference>
<dbReference type="NCBIfam" id="TIGR02079">
    <property type="entry name" value="THD1"/>
    <property type="match status" value="1"/>
</dbReference>
<dbReference type="PANTHER" id="PTHR48078:SF11">
    <property type="entry name" value="THREONINE DEHYDRATASE, MITOCHONDRIAL"/>
    <property type="match status" value="1"/>
</dbReference>
<dbReference type="PANTHER" id="PTHR48078">
    <property type="entry name" value="THREONINE DEHYDRATASE, MITOCHONDRIAL-RELATED"/>
    <property type="match status" value="1"/>
</dbReference>
<dbReference type="Pfam" id="PF00291">
    <property type="entry name" value="PALP"/>
    <property type="match status" value="1"/>
</dbReference>
<dbReference type="Pfam" id="PF00585">
    <property type="entry name" value="Thr_dehydrat_C"/>
    <property type="match status" value="1"/>
</dbReference>
<dbReference type="SUPFAM" id="SSF53686">
    <property type="entry name" value="Tryptophan synthase beta subunit-like PLP-dependent enzymes"/>
    <property type="match status" value="1"/>
</dbReference>
<dbReference type="PROSITE" id="PS51672">
    <property type="entry name" value="ACT_LIKE"/>
    <property type="match status" value="1"/>
</dbReference>
<dbReference type="PROSITE" id="PS00165">
    <property type="entry name" value="DEHYDRATASE_SER_THR"/>
    <property type="match status" value="1"/>
</dbReference>
<accession>Q9X7F1</accession>
<reference key="1">
    <citation type="journal article" date="2001" name="Nature">
        <title>Massive gene decay in the leprosy bacillus.</title>
        <authorList>
            <person name="Cole S.T."/>
            <person name="Eiglmeier K."/>
            <person name="Parkhill J."/>
            <person name="James K.D."/>
            <person name="Thomson N.R."/>
            <person name="Wheeler P.R."/>
            <person name="Honore N."/>
            <person name="Garnier T."/>
            <person name="Churcher C.M."/>
            <person name="Harris D.E."/>
            <person name="Mungall K.L."/>
            <person name="Basham D."/>
            <person name="Brown D."/>
            <person name="Chillingworth T."/>
            <person name="Connor R."/>
            <person name="Davies R.M."/>
            <person name="Devlin K."/>
            <person name="Duthoy S."/>
            <person name="Feltwell T."/>
            <person name="Fraser A."/>
            <person name="Hamlin N."/>
            <person name="Holroyd S."/>
            <person name="Hornsby T."/>
            <person name="Jagels K."/>
            <person name="Lacroix C."/>
            <person name="Maclean J."/>
            <person name="Moule S."/>
            <person name="Murphy L.D."/>
            <person name="Oliver K."/>
            <person name="Quail M.A."/>
            <person name="Rajandream M.A."/>
            <person name="Rutherford K.M."/>
            <person name="Rutter S."/>
            <person name="Seeger K."/>
            <person name="Simon S."/>
            <person name="Simmonds M."/>
            <person name="Skelton J."/>
            <person name="Squares R."/>
            <person name="Squares S."/>
            <person name="Stevens K."/>
            <person name="Taylor K."/>
            <person name="Whitehead S."/>
            <person name="Woodward J.R."/>
            <person name="Barrell B.G."/>
        </authorList>
    </citation>
    <scope>NUCLEOTIDE SEQUENCE [LARGE SCALE GENOMIC DNA]</scope>
    <source>
        <strain>TN</strain>
    </source>
</reference>
<protein>
    <recommendedName>
        <fullName>L-threonine dehydratase biosynthetic IlvA</fullName>
        <ecNumber>4.3.1.19</ecNumber>
    </recommendedName>
    <alternativeName>
        <fullName>Threonine deaminase</fullName>
    </alternativeName>
</protein>